<sequence>MGTRDDVPEAKVLVPVAVYCGSIPRTSAGPRVLPPGSINSSLPHGEGSLQPEPRALLNNEEPSQLLRGLGQLGGLKLDTPSKGWQARNGHPRNLRALSLGDQPLVLLPSPESEANSVARDTIQIKDKLKKRRLSEGLAASSRASLDPGGGPQGVPLHSTIPRATSQRLLRVPRPMPLIQSIPTTPEASGVKEKGLDLPGSIPGPHELRPGAQEAQISWQYLHCNDEKMQKSLGAIVIPPIPKARTVAATPSRVPGSLPSPLPPGQGVLTGLRAPRTRLARGSGPREKTPASLEPKPLASPIRDRPAAAKKPALPFSQSAPTLTAFSFDCAREACPPLKEEDQKEIGTKIQVTISKSAREKMQLKQMKEMELLRRLEEPRTGQELTSQCLGSQRAFMKEGLLPLRGSGTLSVPTRLSGPCRNDVSIILRKWASRASLPSIPISRQEPRFARHASANSLPAVLTLGSPEWEEEEEMDLRACKELRPFSNPELGLRDALQCLNSSDWQMKEKGLVSIQRLAACHSEVLTGKLHDVCLVVTGEVTNLRSKVSHLAISTLGDLFQALKKNMDQEAEEIARCLLQKMADTNEFIQRAAGQSLRAMVENVTLARSLVVLTSAGVYHRNPLIRKYAAEHLSAVLEQIGAEKLLSGTRDSTDMLVHNLVRLAQDSNQDTRFYGRKMVNILMANTKFDAFLKQSLPSYDLQKVMAAIKQQGIEDNDELPSAKGRKVLRSLVVCENGLPIKEGLSCNGPRLVGLRSTLQGRGEMVEQLRELTRLLEAKDFRSRMEGVGQLLELCKAKTELVTAHLVQVFDAFTPRLQDSNKKVNQWALESFAKMIPLLRESLHPMLLSIIITVADNLNSKNSGIYAAAVAVLDAMVESLDNLCLLPALAGRVRFLSGRAVLDVTDRLAVLVASVYPRKPQAVERHVLPILWHFLNTATRNGTLPGPSGNIRGVVCRLSRSLQEHMGSRLLDFAASQPKHVLKTLQELLDSESLGGSRKATDRGVAPDSKTTGSSYPFQLD</sequence>
<keyword id="KW-0025">Alternative splicing</keyword>
<keyword id="KW-1267">Proteomics identification</keyword>
<keyword id="KW-1185">Reference proteome</keyword>
<organism>
    <name type="scientific">Homo sapiens</name>
    <name type="common">Human</name>
    <dbReference type="NCBI Taxonomy" id="9606"/>
    <lineage>
        <taxon>Eukaryota</taxon>
        <taxon>Metazoa</taxon>
        <taxon>Chordata</taxon>
        <taxon>Craniata</taxon>
        <taxon>Vertebrata</taxon>
        <taxon>Euteleostomi</taxon>
        <taxon>Mammalia</taxon>
        <taxon>Eutheria</taxon>
        <taxon>Euarchontoglires</taxon>
        <taxon>Primates</taxon>
        <taxon>Haplorrhini</taxon>
        <taxon>Catarrhini</taxon>
        <taxon>Hominidae</taxon>
        <taxon>Homo</taxon>
    </lineage>
</organism>
<evidence type="ECO:0000256" key="1">
    <source>
        <dbReference type="SAM" id="MobiDB-lite"/>
    </source>
</evidence>
<evidence type="ECO:0000269" key="2">
    <source>
    </source>
</evidence>
<evidence type="ECO:0000303" key="3">
    <source>
    </source>
</evidence>
<evidence type="ECO:0000305" key="4"/>
<evidence type="ECO:0000312" key="5">
    <source>
        <dbReference type="HGNC" id="HGNC:33715"/>
    </source>
</evidence>
<reference key="1">
    <citation type="journal article" date="2004" name="Nat. Genet.">
        <title>Complete sequencing and characterization of 21,243 full-length human cDNAs.</title>
        <authorList>
            <person name="Ota T."/>
            <person name="Suzuki Y."/>
            <person name="Nishikawa T."/>
            <person name="Otsuki T."/>
            <person name="Sugiyama T."/>
            <person name="Irie R."/>
            <person name="Wakamatsu A."/>
            <person name="Hayashi K."/>
            <person name="Sato H."/>
            <person name="Nagai K."/>
            <person name="Kimura K."/>
            <person name="Makita H."/>
            <person name="Sekine M."/>
            <person name="Obayashi M."/>
            <person name="Nishi T."/>
            <person name="Shibahara T."/>
            <person name="Tanaka T."/>
            <person name="Ishii S."/>
            <person name="Yamamoto J."/>
            <person name="Saito K."/>
            <person name="Kawai Y."/>
            <person name="Isono Y."/>
            <person name="Nakamura Y."/>
            <person name="Nagahari K."/>
            <person name="Murakami K."/>
            <person name="Yasuda T."/>
            <person name="Iwayanagi T."/>
            <person name="Wagatsuma M."/>
            <person name="Shiratori A."/>
            <person name="Sudo H."/>
            <person name="Hosoiri T."/>
            <person name="Kaku Y."/>
            <person name="Kodaira H."/>
            <person name="Kondo H."/>
            <person name="Sugawara M."/>
            <person name="Takahashi M."/>
            <person name="Kanda K."/>
            <person name="Yokoi T."/>
            <person name="Furuya T."/>
            <person name="Kikkawa E."/>
            <person name="Omura Y."/>
            <person name="Abe K."/>
            <person name="Kamihara K."/>
            <person name="Katsuta N."/>
            <person name="Sato K."/>
            <person name="Tanikawa M."/>
            <person name="Yamazaki M."/>
            <person name="Ninomiya K."/>
            <person name="Ishibashi T."/>
            <person name="Yamashita H."/>
            <person name="Murakawa K."/>
            <person name="Fujimori K."/>
            <person name="Tanai H."/>
            <person name="Kimata M."/>
            <person name="Watanabe M."/>
            <person name="Hiraoka S."/>
            <person name="Chiba Y."/>
            <person name="Ishida S."/>
            <person name="Ono Y."/>
            <person name="Takiguchi S."/>
            <person name="Watanabe S."/>
            <person name="Yosida M."/>
            <person name="Hotuta T."/>
            <person name="Kusano J."/>
            <person name="Kanehori K."/>
            <person name="Takahashi-Fujii A."/>
            <person name="Hara H."/>
            <person name="Tanase T.-O."/>
            <person name="Nomura Y."/>
            <person name="Togiya S."/>
            <person name="Komai F."/>
            <person name="Hara R."/>
            <person name="Takeuchi K."/>
            <person name="Arita M."/>
            <person name="Imose N."/>
            <person name="Musashino K."/>
            <person name="Yuuki H."/>
            <person name="Oshima A."/>
            <person name="Sasaki N."/>
            <person name="Aotsuka S."/>
            <person name="Yoshikawa Y."/>
            <person name="Matsunawa H."/>
            <person name="Ichihara T."/>
            <person name="Shiohata N."/>
            <person name="Sano S."/>
            <person name="Moriya S."/>
            <person name="Momiyama H."/>
            <person name="Satoh N."/>
            <person name="Takami S."/>
            <person name="Terashima Y."/>
            <person name="Suzuki O."/>
            <person name="Nakagawa S."/>
            <person name="Senoh A."/>
            <person name="Mizoguchi H."/>
            <person name="Goto Y."/>
            <person name="Shimizu F."/>
            <person name="Wakebe H."/>
            <person name="Hishigaki H."/>
            <person name="Watanabe T."/>
            <person name="Sugiyama A."/>
            <person name="Takemoto M."/>
            <person name="Kawakami B."/>
            <person name="Yamazaki M."/>
            <person name="Watanabe K."/>
            <person name="Kumagai A."/>
            <person name="Itakura S."/>
            <person name="Fukuzumi Y."/>
            <person name="Fujimori Y."/>
            <person name="Komiyama M."/>
            <person name="Tashiro H."/>
            <person name="Tanigami A."/>
            <person name="Fujiwara T."/>
            <person name="Ono T."/>
            <person name="Yamada K."/>
            <person name="Fujii Y."/>
            <person name="Ozaki K."/>
            <person name="Hirao M."/>
            <person name="Ohmori Y."/>
            <person name="Kawabata A."/>
            <person name="Hikiji T."/>
            <person name="Kobatake N."/>
            <person name="Inagaki H."/>
            <person name="Ikema Y."/>
            <person name="Okamoto S."/>
            <person name="Okitani R."/>
            <person name="Kawakami T."/>
            <person name="Noguchi S."/>
            <person name="Itoh T."/>
            <person name="Shigeta K."/>
            <person name="Senba T."/>
            <person name="Matsumura K."/>
            <person name="Nakajima Y."/>
            <person name="Mizuno T."/>
            <person name="Morinaga M."/>
            <person name="Sasaki M."/>
            <person name="Togashi T."/>
            <person name="Oyama M."/>
            <person name="Hata H."/>
            <person name="Watanabe M."/>
            <person name="Komatsu T."/>
            <person name="Mizushima-Sugano J."/>
            <person name="Satoh T."/>
            <person name="Shirai Y."/>
            <person name="Takahashi Y."/>
            <person name="Nakagawa K."/>
            <person name="Okumura K."/>
            <person name="Nagase T."/>
            <person name="Nomura N."/>
            <person name="Kikuchi H."/>
            <person name="Masuho Y."/>
            <person name="Yamashita R."/>
            <person name="Nakai K."/>
            <person name="Yada T."/>
            <person name="Nakamura Y."/>
            <person name="Ohara O."/>
            <person name="Isogai T."/>
            <person name="Sugano S."/>
        </authorList>
    </citation>
    <scope>NUCLEOTIDE SEQUENCE [LARGE SCALE MRNA] (ISOFORMS 2 AND 3)</scope>
    <scope>VARIANTS CYS-724; ALA-941 AND VAL-944</scope>
    <source>
        <tissue>Heart</tissue>
        <tissue>Testis</tissue>
    </source>
</reference>
<reference key="2">
    <citation type="journal article" date="2005" name="Nature">
        <title>Generation and annotation of the DNA sequences of human chromosomes 2 and 4.</title>
        <authorList>
            <person name="Hillier L.W."/>
            <person name="Graves T.A."/>
            <person name="Fulton R.S."/>
            <person name="Fulton L.A."/>
            <person name="Pepin K.H."/>
            <person name="Minx P."/>
            <person name="Wagner-McPherson C."/>
            <person name="Layman D."/>
            <person name="Wylie K."/>
            <person name="Sekhon M."/>
            <person name="Becker M.C."/>
            <person name="Fewell G.A."/>
            <person name="Delehaunty K.D."/>
            <person name="Miner T.L."/>
            <person name="Nash W.E."/>
            <person name="Kremitzki C."/>
            <person name="Oddy L."/>
            <person name="Du H."/>
            <person name="Sun H."/>
            <person name="Bradshaw-Cordum H."/>
            <person name="Ali J."/>
            <person name="Carter J."/>
            <person name="Cordes M."/>
            <person name="Harris A."/>
            <person name="Isak A."/>
            <person name="van Brunt A."/>
            <person name="Nguyen C."/>
            <person name="Du F."/>
            <person name="Courtney L."/>
            <person name="Kalicki J."/>
            <person name="Ozersky P."/>
            <person name="Abbott S."/>
            <person name="Armstrong J."/>
            <person name="Belter E.A."/>
            <person name="Caruso L."/>
            <person name="Cedroni M."/>
            <person name="Cotton M."/>
            <person name="Davidson T."/>
            <person name="Desai A."/>
            <person name="Elliott G."/>
            <person name="Erb T."/>
            <person name="Fronick C."/>
            <person name="Gaige T."/>
            <person name="Haakenson W."/>
            <person name="Haglund K."/>
            <person name="Holmes A."/>
            <person name="Harkins R."/>
            <person name="Kim K."/>
            <person name="Kruchowski S.S."/>
            <person name="Strong C.M."/>
            <person name="Grewal N."/>
            <person name="Goyea E."/>
            <person name="Hou S."/>
            <person name="Levy A."/>
            <person name="Martinka S."/>
            <person name="Mead K."/>
            <person name="McLellan M.D."/>
            <person name="Meyer R."/>
            <person name="Randall-Maher J."/>
            <person name="Tomlinson C."/>
            <person name="Dauphin-Kohlberg S."/>
            <person name="Kozlowicz-Reilly A."/>
            <person name="Shah N."/>
            <person name="Swearengen-Shahid S."/>
            <person name="Snider J."/>
            <person name="Strong J.T."/>
            <person name="Thompson J."/>
            <person name="Yoakum M."/>
            <person name="Leonard S."/>
            <person name="Pearman C."/>
            <person name="Trani L."/>
            <person name="Radionenko M."/>
            <person name="Waligorski J.E."/>
            <person name="Wang C."/>
            <person name="Rock S.M."/>
            <person name="Tin-Wollam A.-M."/>
            <person name="Maupin R."/>
            <person name="Latreille P."/>
            <person name="Wendl M.C."/>
            <person name="Yang S.-P."/>
            <person name="Pohl C."/>
            <person name="Wallis J.W."/>
            <person name="Spieth J."/>
            <person name="Bieri T.A."/>
            <person name="Berkowicz N."/>
            <person name="Nelson J.O."/>
            <person name="Osborne J."/>
            <person name="Ding L."/>
            <person name="Meyer R."/>
            <person name="Sabo A."/>
            <person name="Shotland Y."/>
            <person name="Sinha P."/>
            <person name="Wohldmann P.E."/>
            <person name="Cook L.L."/>
            <person name="Hickenbotham M.T."/>
            <person name="Eldred J."/>
            <person name="Williams D."/>
            <person name="Jones T.A."/>
            <person name="She X."/>
            <person name="Ciccarelli F.D."/>
            <person name="Izaurralde E."/>
            <person name="Taylor J."/>
            <person name="Schmutz J."/>
            <person name="Myers R.M."/>
            <person name="Cox D.R."/>
            <person name="Huang X."/>
            <person name="McPherson J.D."/>
            <person name="Mardis E.R."/>
            <person name="Clifton S.W."/>
            <person name="Warren W.C."/>
            <person name="Chinwalla A.T."/>
            <person name="Eddy S.R."/>
            <person name="Marra M.A."/>
            <person name="Ovcharenko I."/>
            <person name="Furey T.S."/>
            <person name="Miller W."/>
            <person name="Eichler E.E."/>
            <person name="Bork P."/>
            <person name="Suyama M."/>
            <person name="Torrents D."/>
            <person name="Waterston R.H."/>
            <person name="Wilson R.K."/>
        </authorList>
    </citation>
    <scope>NUCLEOTIDE SEQUENCE [LARGE SCALE GENOMIC DNA]</scope>
</reference>
<name>TGRM2_HUMAN</name>
<dbReference type="EMBL" id="AK125239">
    <property type="protein sequence ID" value="BAC86095.1"/>
    <property type="molecule type" value="mRNA"/>
</dbReference>
<dbReference type="EMBL" id="AK125744">
    <property type="protein sequence ID" value="BAC86270.1"/>
    <property type="molecule type" value="mRNA"/>
</dbReference>
<dbReference type="EMBL" id="AC105398">
    <property type="status" value="NOT_ANNOTATED_CDS"/>
    <property type="molecule type" value="Genomic_DNA"/>
</dbReference>
<dbReference type="CCDS" id="CCDS1769.2">
    <molecule id="Q6ZUX3-1"/>
</dbReference>
<dbReference type="RefSeq" id="NP_954974.2">
    <molecule id="Q6ZUX3-1"/>
    <property type="nucleotide sequence ID" value="NM_199280.4"/>
</dbReference>
<dbReference type="RefSeq" id="XP_011530933.1">
    <property type="nucleotide sequence ID" value="XM_011532631.1"/>
</dbReference>
<dbReference type="RefSeq" id="XP_016858996.1">
    <property type="nucleotide sequence ID" value="XM_017003507.1"/>
</dbReference>
<dbReference type="RefSeq" id="XP_016859004.1">
    <property type="nucleotide sequence ID" value="XM_017003515.1"/>
</dbReference>
<dbReference type="RefSeq" id="XP_047299524.1">
    <molecule id="Q6ZUX3-1"/>
    <property type="nucleotide sequence ID" value="XM_047443568.1"/>
</dbReference>
<dbReference type="BioGRID" id="127910">
    <property type="interactions" value="2"/>
</dbReference>
<dbReference type="FunCoup" id="Q6ZUX3">
    <property type="interactions" value="10"/>
</dbReference>
<dbReference type="IntAct" id="Q6ZUX3">
    <property type="interactions" value="1"/>
</dbReference>
<dbReference type="STRING" id="9606.ENSP00000368876"/>
<dbReference type="GlyGen" id="Q6ZUX3">
    <property type="glycosylation" value="1 site"/>
</dbReference>
<dbReference type="iPTMnet" id="Q6ZUX3"/>
<dbReference type="PhosphoSitePlus" id="Q6ZUX3"/>
<dbReference type="BioMuta" id="TOGARAM2"/>
<dbReference type="DMDM" id="172046176"/>
<dbReference type="jPOST" id="Q6ZUX3"/>
<dbReference type="MassIVE" id="Q6ZUX3"/>
<dbReference type="PaxDb" id="9606-ENSP00000368876"/>
<dbReference type="PeptideAtlas" id="Q6ZUX3"/>
<dbReference type="ProteomicsDB" id="68373">
    <molecule id="Q6ZUX3-1"/>
</dbReference>
<dbReference type="Antibodypedia" id="51094">
    <property type="antibodies" value="13 antibodies from 6 providers"/>
</dbReference>
<dbReference type="DNASU" id="165186"/>
<dbReference type="Ensembl" id="ENST00000379558.5">
    <molecule id="Q6ZUX3-1"/>
    <property type="protein sequence ID" value="ENSP00000368876.3"/>
    <property type="gene ID" value="ENSG00000189350.13"/>
</dbReference>
<dbReference type="GeneID" id="165186"/>
<dbReference type="KEGG" id="hsa:165186"/>
<dbReference type="MANE-Select" id="ENST00000379558.5">
    <property type="protein sequence ID" value="ENSP00000368876.3"/>
    <property type="RefSeq nucleotide sequence ID" value="NM_199280.4"/>
    <property type="RefSeq protein sequence ID" value="NP_954974.2"/>
</dbReference>
<dbReference type="UCSC" id="uc010ezl.4">
    <molecule id="Q6ZUX3-1"/>
    <property type="organism name" value="human"/>
</dbReference>
<dbReference type="AGR" id="HGNC:33715"/>
<dbReference type="CTD" id="165186"/>
<dbReference type="DisGeNET" id="165186"/>
<dbReference type="GeneCards" id="TOGARAM2"/>
<dbReference type="HGNC" id="HGNC:33715">
    <property type="gene designation" value="TOGARAM2"/>
</dbReference>
<dbReference type="HPA" id="ENSG00000189350">
    <property type="expression patterns" value="Group enriched (choroid plexus, fallopian tube)"/>
</dbReference>
<dbReference type="MIM" id="620949">
    <property type="type" value="gene"/>
</dbReference>
<dbReference type="neXtProt" id="NX_Q6ZUX3"/>
<dbReference type="OpenTargets" id="ENSG00000189350"/>
<dbReference type="PharmGKB" id="PA162387471"/>
<dbReference type="VEuPathDB" id="HostDB:ENSG00000189350"/>
<dbReference type="eggNOG" id="KOG2933">
    <property type="taxonomic scope" value="Eukaryota"/>
</dbReference>
<dbReference type="GeneTree" id="ENSGT00940000156217"/>
<dbReference type="HOGENOM" id="CLU_306027_0_0_1"/>
<dbReference type="InParanoid" id="Q6ZUX3"/>
<dbReference type="OMA" id="PIRDRPA"/>
<dbReference type="OrthoDB" id="63891at2759"/>
<dbReference type="PAN-GO" id="Q6ZUX3">
    <property type="GO annotations" value="7 GO annotations based on evolutionary models"/>
</dbReference>
<dbReference type="PhylomeDB" id="Q6ZUX3"/>
<dbReference type="TreeFam" id="TF315518"/>
<dbReference type="PathwayCommons" id="Q6ZUX3"/>
<dbReference type="BioGRID-ORCS" id="165186">
    <property type="hits" value="7 hits in 1133 CRISPR screens"/>
</dbReference>
<dbReference type="GenomeRNAi" id="165186"/>
<dbReference type="Pharos" id="Q6ZUX3">
    <property type="development level" value="Tdark"/>
</dbReference>
<dbReference type="PRO" id="PR:Q6ZUX3"/>
<dbReference type="Proteomes" id="UP000005640">
    <property type="component" value="Chromosome 2"/>
</dbReference>
<dbReference type="RNAct" id="Q6ZUX3">
    <property type="molecule type" value="protein"/>
</dbReference>
<dbReference type="Bgee" id="ENSG00000189350">
    <property type="expression patterns" value="Expressed in right uterine tube and 123 other cell types or tissues"/>
</dbReference>
<dbReference type="ExpressionAtlas" id="Q6ZUX3">
    <property type="expression patterns" value="baseline and differential"/>
</dbReference>
<dbReference type="GO" id="GO:0005929">
    <property type="term" value="C:cilium"/>
    <property type="evidence" value="ECO:0000318"/>
    <property type="project" value="GO_Central"/>
</dbReference>
<dbReference type="GO" id="GO:0005881">
    <property type="term" value="C:cytoplasmic microtubule"/>
    <property type="evidence" value="ECO:0000318"/>
    <property type="project" value="GO_Central"/>
</dbReference>
<dbReference type="GO" id="GO:0008017">
    <property type="term" value="F:microtubule binding"/>
    <property type="evidence" value="ECO:0000318"/>
    <property type="project" value="GO_Central"/>
</dbReference>
<dbReference type="GO" id="GO:0000226">
    <property type="term" value="P:microtubule cytoskeleton organization"/>
    <property type="evidence" value="ECO:0000318"/>
    <property type="project" value="GO_Central"/>
</dbReference>
<dbReference type="GO" id="GO:0051494">
    <property type="term" value="P:negative regulation of cytoskeleton organization"/>
    <property type="evidence" value="ECO:0007669"/>
    <property type="project" value="UniProtKB-ARBA"/>
</dbReference>
<dbReference type="GO" id="GO:1902904">
    <property type="term" value="P:negative regulation of supramolecular fiber organization"/>
    <property type="evidence" value="ECO:0007669"/>
    <property type="project" value="UniProtKB-ARBA"/>
</dbReference>
<dbReference type="Gene3D" id="1.25.10.10">
    <property type="entry name" value="Leucine-rich Repeat Variant"/>
    <property type="match status" value="2"/>
</dbReference>
<dbReference type="InterPro" id="IPR011989">
    <property type="entry name" value="ARM-like"/>
</dbReference>
<dbReference type="InterPro" id="IPR016024">
    <property type="entry name" value="ARM-type_fold"/>
</dbReference>
<dbReference type="InterPro" id="IPR024395">
    <property type="entry name" value="CLASP_N_dom"/>
</dbReference>
<dbReference type="InterPro" id="IPR034085">
    <property type="entry name" value="TOG"/>
</dbReference>
<dbReference type="PANTHER" id="PTHR21567">
    <property type="entry name" value="CLASP"/>
    <property type="match status" value="1"/>
</dbReference>
<dbReference type="PANTHER" id="PTHR21567:SF42">
    <property type="entry name" value="TOG ARRAY REGULATOR OF AXONEMAL MICROTUBULES PROTEIN 2"/>
    <property type="match status" value="1"/>
</dbReference>
<dbReference type="Pfam" id="PF12348">
    <property type="entry name" value="CLASP_N"/>
    <property type="match status" value="1"/>
</dbReference>
<dbReference type="SMART" id="SM01349">
    <property type="entry name" value="TOG"/>
    <property type="match status" value="2"/>
</dbReference>
<dbReference type="SUPFAM" id="SSF48371">
    <property type="entry name" value="ARM repeat"/>
    <property type="match status" value="1"/>
</dbReference>
<accession>Q6ZUX3</accession>
<accession>Q6ZUF5</accession>
<comment type="alternative products">
    <event type="alternative splicing"/>
    <isoform>
        <id>Q6ZUX3-1</id>
        <name>1</name>
        <sequence type="displayed"/>
    </isoform>
    <isoform>
        <id>Q6ZUX3-2</id>
        <name>2</name>
        <sequence type="described" ref="VSP_032492"/>
    </isoform>
    <isoform>
        <id>Q6ZUX3-3</id>
        <name>3</name>
        <sequence type="described" ref="VSP_032491 VSP_032493 VSP_032494 VSP_032495"/>
    </isoform>
</comment>
<comment type="similarity">
    <text evidence="4">Belongs to the Crescerin family.</text>
</comment>
<feature type="chain" id="PRO_0000325938" description="TOG array regulator of axonemal microtubules protein 2">
    <location>
        <begin position="1"/>
        <end position="1019"/>
    </location>
</feature>
<feature type="region of interest" description="Disordered" evidence="1">
    <location>
        <begin position="28"/>
        <end position="54"/>
    </location>
</feature>
<feature type="region of interest" description="Disordered" evidence="1">
    <location>
        <begin position="131"/>
        <end position="158"/>
    </location>
</feature>
<feature type="region of interest" description="Disordered" evidence="1">
    <location>
        <begin position="249"/>
        <end position="311"/>
    </location>
</feature>
<feature type="region of interest" description="Disordered" evidence="1">
    <location>
        <begin position="991"/>
        <end position="1019"/>
    </location>
</feature>
<feature type="compositionally biased region" description="Polar residues" evidence="1">
    <location>
        <begin position="1007"/>
        <end position="1019"/>
    </location>
</feature>
<feature type="splice variant" id="VSP_032491" description="In isoform 3." evidence="3">
    <location>
        <begin position="1"/>
        <end position="702"/>
    </location>
</feature>
<feature type="splice variant" id="VSP_032492" description="In isoform 2." evidence="3">
    <location>
        <begin position="1"/>
        <end position="473"/>
    </location>
</feature>
<feature type="splice variant" id="VSP_032493" description="In isoform 3." evidence="3">
    <original>VMAAIKQQ</original>
    <variation>MLCVYFFK</variation>
    <location>
        <begin position="703"/>
        <end position="710"/>
    </location>
</feature>
<feature type="splice variant" id="VSP_032494" description="In isoform 3." evidence="3">
    <original>VLVASVYPRKPQAVERHVLPILWHFLNTATRNGTLPGPSGNI</original>
    <variation>GEHPQPHPTPSPGRFLFSPGLWLNHSPSYLRPEIIPPNHLKF</variation>
    <location>
        <begin position="908"/>
        <end position="949"/>
    </location>
</feature>
<feature type="splice variant" id="VSP_032495" description="In isoform 3." evidence="3">
    <location>
        <begin position="950"/>
        <end position="1019"/>
    </location>
</feature>
<feature type="sequence variant" id="VAR_054091" description="In dbSNP:rs13009279.">
    <original>A</original>
    <variation>T</variation>
    <location>
        <position position="55"/>
    </location>
</feature>
<feature type="sequence variant" id="VAR_054092" description="In dbSNP:rs12623297.">
    <original>Q</original>
    <variation>R</variation>
    <location>
        <position position="265"/>
    </location>
</feature>
<feature type="sequence variant" id="VAR_054093" description="In dbSNP:rs11127202.">
    <original>Q</original>
    <variation>R</variation>
    <location>
        <position position="362"/>
    </location>
</feature>
<feature type="sequence variant" id="VAR_054094" description="In dbSNP:rs1109758.">
    <original>I</original>
    <variation>V</variation>
    <location>
        <position position="441"/>
    </location>
</feature>
<feature type="sequence variant" id="VAR_054095" description="In dbSNP:rs6721861.">
    <original>V</original>
    <variation>A</variation>
    <location>
        <position position="535"/>
    </location>
</feature>
<feature type="sequence variant" id="VAR_062242" description="In dbSNP:rs60403047." evidence="2">
    <original>R</original>
    <variation>C</variation>
    <location>
        <position position="724"/>
    </location>
</feature>
<feature type="sequence variant" id="VAR_054096" description="In dbSNP:rs895591." evidence="2">
    <original>T</original>
    <variation>A</variation>
    <location>
        <position position="941"/>
    </location>
</feature>
<feature type="sequence variant" id="VAR_054097" description="In dbSNP:rs7577483." evidence="2">
    <original>G</original>
    <variation>V</variation>
    <location>
        <position position="944"/>
    </location>
</feature>
<feature type="sequence conflict" description="In Ref. 1; BAC86270." evidence="4" ref="1">
    <original>L</original>
    <variation>P</variation>
    <location>
        <position position="750"/>
    </location>
</feature>
<proteinExistence type="evidence at protein level"/>
<protein>
    <recommendedName>
        <fullName evidence="5">TOG array regulator of axonemal microtubules protein 2</fullName>
    </recommendedName>
    <alternativeName>
        <fullName evidence="4">Crescerin-2</fullName>
    </alternativeName>
</protein>
<gene>
    <name evidence="5" type="primary">TOGARAM2</name>
    <name type="synonym">FAM179A</name>
</gene>